<accession>P21570</accession>
<reference key="1">
    <citation type="journal article" date="1990" name="Biochem. Biophys. Res. Commun.">
        <title>Isolation and sequencing of mouse angiogenin DNA.</title>
        <authorList>
            <person name="Bond M.D."/>
            <person name="Vallee B.L."/>
        </authorList>
    </citation>
    <scope>NUCLEOTIDE SEQUENCE [GENOMIC DNA]</scope>
</reference>
<reference key="2">
    <citation type="journal article" date="2004" name="Genome Res.">
        <title>The status, quality, and expansion of the NIH full-length cDNA project: the Mammalian Gene Collection (MGC).</title>
        <authorList>
            <consortium name="The MGC Project Team"/>
        </authorList>
    </citation>
    <scope>NUCLEOTIDE SEQUENCE [LARGE SCALE MRNA]</scope>
    <source>
        <strain>FVB/N</strain>
        <tissue>Liver</tissue>
    </source>
</reference>
<reference key="3">
    <citation type="journal article" date="1993" name="Biochim. Biophys. Acta">
        <title>Characterization and sequencing of rabbit, pig and mouse angiogenins: discernment of functionally important residues and regions.</title>
        <authorList>
            <person name="Bond M.D."/>
            <person name="Strydom D.J."/>
            <person name="Vallee B.L."/>
        </authorList>
    </citation>
    <scope>PARTIAL PROTEIN SEQUENCE</scope>
    <source>
        <tissue>Serum</tissue>
    </source>
</reference>
<reference key="4">
    <citation type="journal article" date="2009" name="FEBS Lett.">
        <title>Stress induces tRNA cleavage by angiogenin in mammalian cells.</title>
        <authorList>
            <person name="Fu H."/>
            <person name="Feng J."/>
            <person name="Liu Q."/>
            <person name="Sun F."/>
            <person name="Tie Y."/>
            <person name="Zhu J."/>
            <person name="Xing R."/>
            <person name="Sun Z."/>
            <person name="Zheng X."/>
        </authorList>
    </citation>
    <scope>FUNCTION</scope>
</reference>
<reference key="5">
    <citation type="journal article" date="2014" name="Mol. Cell. Biol.">
        <title>Angiogenin-cleaved tRNA halves interact with cytochrome c, protecting cells from apoptosis during osmotic stress.</title>
        <authorList>
            <person name="Saikia M."/>
            <person name="Jobava R."/>
            <person name="Parisien M."/>
            <person name="Putnam A."/>
            <person name="Krokowski D."/>
            <person name="Gao X.H."/>
            <person name="Guan B.J."/>
            <person name="Yuan Y."/>
            <person name="Jankowsky E."/>
            <person name="Feng Z."/>
            <person name="Hu G.F."/>
            <person name="Pusztai-Carey M."/>
            <person name="Gorla M."/>
            <person name="Sepuri N.B."/>
            <person name="Pan T."/>
            <person name="Hatzoglou M."/>
        </authorList>
    </citation>
    <scope>FUNCTION</scope>
</reference>
<reference key="6">
    <citation type="journal article" date="2016" name="Cell">
        <title>Angiogenin promotes hematopoietic regeneration by dichotomously regulating quiescence of stem and progenitor cells.</title>
        <authorList>
            <person name="Goncalves K.A."/>
            <person name="Silberstein L."/>
            <person name="Li S."/>
            <person name="Severe N."/>
            <person name="Hu M.G."/>
            <person name="Yang H."/>
            <person name="Scadden D.T."/>
            <person name="Hu G.F."/>
        </authorList>
    </citation>
    <scope>FUNCTION</scope>
</reference>
<reference key="7">
    <citation type="journal article" date="2017" name="Cell">
        <title>Plexin-B2 mediates physiologic and pathologic functions of angiogenin.</title>
        <authorList>
            <person name="Yu W."/>
            <person name="Goncalves K.A."/>
            <person name="Li S."/>
            <person name="Kishikawa H."/>
            <person name="Sun G."/>
            <person name="Yang H."/>
            <person name="Vanli N."/>
            <person name="Wu Y."/>
            <person name="Jiang Y."/>
            <person name="Hu M.G."/>
            <person name="Friedel R.H."/>
            <person name="Hu G.F."/>
        </authorList>
    </citation>
    <scope>FUNCTION</scope>
</reference>
<reference key="8">
    <citation type="journal article" date="2020" name="EMBO J.">
        <title>Myeloid cells protect intestinal epithelial barrier integrity through the angiogenin/plexin-B2 axis.</title>
        <authorList>
            <person name="Bai R."/>
            <person name="Sun D."/>
            <person name="Chen M."/>
            <person name="Shi X."/>
            <person name="Luo L."/>
            <person name="Yao Z."/>
            <person name="Liu Y."/>
            <person name="Ge X."/>
            <person name="Gao X."/>
            <person name="Hu G.F."/>
            <person name="Zhou W."/>
            <person name="Sheng J."/>
            <person name="Xu Z."/>
        </authorList>
    </citation>
    <scope>FUNCTION</scope>
</reference>
<reference key="9">
    <citation type="journal article" date="2021" name="Nat. Commun.">
        <title>Osteoclasts protect bone blood vessels against senescence through the angiogenin/plexin-B2 axis.</title>
        <authorList>
            <person name="Liu X."/>
            <person name="Chai Y."/>
            <person name="Liu G."/>
            <person name="Su W."/>
            <person name="Guo Q."/>
            <person name="Lv X."/>
            <person name="Gao P."/>
            <person name="Yu B."/>
            <person name="Ferbeyre G."/>
            <person name="Cao X."/>
            <person name="Wan M."/>
        </authorList>
    </citation>
    <scope>FUNCTION</scope>
    <scope>SUBCELLULAR LOCATION</scope>
</reference>
<reference key="10">
    <citation type="journal article" date="2021" name="Science">
        <title>SLFN2 protection of tRNAs from stress-induced cleavage is essential for T cell-mediated immunity.</title>
        <authorList>
            <person name="Yue T."/>
            <person name="Zhan X."/>
            <person name="Zhang D."/>
            <person name="Jain R."/>
            <person name="Wang K.W."/>
            <person name="Choi J.H."/>
            <person name="Misawa T."/>
            <person name="Su L."/>
            <person name="Quan J."/>
            <person name="Hildebrand S."/>
            <person name="Xu D."/>
            <person name="Li X."/>
            <person name="Turer E."/>
            <person name="Sun L."/>
            <person name="Moresco E.M.Y."/>
            <person name="Beutler B."/>
        </authorList>
    </citation>
    <scope>FUNCTION</scope>
</reference>
<reference key="11">
    <citation type="journal article" date="2005" name="Acta Crystallogr. D">
        <title>Structure of murine angiogenin: features of the substrate- and cell-binding regions and prospects for inhibitor-binding studies.</title>
        <authorList>
            <person name="Holloway D.E."/>
            <person name="Chavali G.B."/>
            <person name="Hares M.C."/>
            <person name="Subramanian V."/>
            <person name="Acharya K.R."/>
        </authorList>
    </citation>
    <scope>X-RAY CRYSTALLOGRAPHY (1.5 ANGSTROMS) OF 25-145</scope>
    <scope>DISULFIDE BONDS</scope>
</reference>
<dbReference type="EC" id="3.1.27.-" evidence="4 9"/>
<dbReference type="EMBL" id="U22516">
    <property type="protein sequence ID" value="AAA91366.1"/>
    <property type="molecule type" value="Genomic_DNA"/>
</dbReference>
<dbReference type="EMBL" id="BC055355">
    <property type="protein sequence ID" value="AAH55355.1"/>
    <property type="molecule type" value="mRNA"/>
</dbReference>
<dbReference type="CCDS" id="CCDS27034.1"/>
<dbReference type="PIR" id="A35932">
    <property type="entry name" value="A35932"/>
</dbReference>
<dbReference type="RefSeq" id="NP_001155203.1">
    <property type="nucleotide sequence ID" value="NM_001161731.3"/>
</dbReference>
<dbReference type="RefSeq" id="NP_031473.1">
    <property type="nucleotide sequence ID" value="NM_007447.4"/>
</dbReference>
<dbReference type="PDB" id="2BWK">
    <property type="method" value="X-ray"/>
    <property type="resolution" value="1.50 A"/>
    <property type="chains" value="A=25-145"/>
</dbReference>
<dbReference type="PDB" id="2BWL">
    <property type="method" value="X-ray"/>
    <property type="resolution" value="1.62 A"/>
    <property type="chains" value="A=25-145"/>
</dbReference>
<dbReference type="PDBsum" id="2BWK"/>
<dbReference type="PDBsum" id="2BWL"/>
<dbReference type="SMR" id="P21570"/>
<dbReference type="FunCoup" id="P21570">
    <property type="interactions" value="96"/>
</dbReference>
<dbReference type="STRING" id="10090.ENSMUSP00000067434"/>
<dbReference type="PhosphoSitePlus" id="P21570"/>
<dbReference type="CPTAC" id="non-CPTAC-3960"/>
<dbReference type="jPOST" id="P21570"/>
<dbReference type="PaxDb" id="10090-ENSMUSP00000067434"/>
<dbReference type="PeptideAtlas" id="P21570"/>
<dbReference type="ProteomicsDB" id="296290"/>
<dbReference type="DNASU" id="11727"/>
<dbReference type="Ensembl" id="ENSMUST00000069011.9">
    <property type="protein sequence ID" value="ENSMUSP00000067434.8"/>
    <property type="gene ID" value="ENSMUSG00000072115.12"/>
</dbReference>
<dbReference type="Ensembl" id="ENSMUST00000171688.9">
    <property type="protein sequence ID" value="ENSMUSP00000132084.2"/>
    <property type="gene ID" value="ENSMUSG00000072115.12"/>
</dbReference>
<dbReference type="GeneID" id="11727"/>
<dbReference type="KEGG" id="mmu:11727"/>
<dbReference type="UCSC" id="uc007tml.2">
    <property type="organism name" value="mouse"/>
</dbReference>
<dbReference type="AGR" id="MGI:88022"/>
<dbReference type="CTD" id="283"/>
<dbReference type="MGI" id="MGI:88022">
    <property type="gene designation" value="Ang"/>
</dbReference>
<dbReference type="VEuPathDB" id="HostDB:ENSMUSG00000072115"/>
<dbReference type="eggNOG" id="ENOG502S9Q1">
    <property type="taxonomic scope" value="Eukaryota"/>
</dbReference>
<dbReference type="GeneTree" id="ENSGT00940000162981"/>
<dbReference type="HOGENOM" id="CLU_117006_3_1_1"/>
<dbReference type="InParanoid" id="P21570"/>
<dbReference type="OMA" id="FIHGNKG"/>
<dbReference type="OrthoDB" id="8573660at2759"/>
<dbReference type="PhylomeDB" id="P21570"/>
<dbReference type="TreeFam" id="TF333393"/>
<dbReference type="Reactome" id="R-MMU-418990">
    <property type="pathway name" value="Adherens junctions interactions"/>
</dbReference>
<dbReference type="BioGRID-ORCS" id="11727">
    <property type="hits" value="4 hits in 78 CRISPR screens"/>
</dbReference>
<dbReference type="EvolutionaryTrace" id="P21570"/>
<dbReference type="PRO" id="PR:P21570"/>
<dbReference type="Proteomes" id="UP000000589">
    <property type="component" value="Chromosome 14"/>
</dbReference>
<dbReference type="RNAct" id="P21570">
    <property type="molecule type" value="protein"/>
</dbReference>
<dbReference type="Bgee" id="ENSMUSG00000072115">
    <property type="expression patterns" value="Expressed in left lobe of liver and 175 other cell types or tissues"/>
</dbReference>
<dbReference type="ExpressionAtlas" id="P21570">
    <property type="expression patterns" value="baseline and differential"/>
</dbReference>
<dbReference type="GO" id="GO:0032311">
    <property type="term" value="C:angiogenin-PRI complex"/>
    <property type="evidence" value="ECO:0000250"/>
    <property type="project" value="UniProtKB"/>
</dbReference>
<dbReference type="GO" id="GO:0005604">
    <property type="term" value="C:basement membrane"/>
    <property type="evidence" value="ECO:0000250"/>
    <property type="project" value="UniProtKB"/>
</dbReference>
<dbReference type="GO" id="GO:0005737">
    <property type="term" value="C:cytoplasm"/>
    <property type="evidence" value="ECO:0000250"/>
    <property type="project" value="UniProtKB"/>
</dbReference>
<dbReference type="GO" id="GO:0010494">
    <property type="term" value="C:cytoplasmic stress granule"/>
    <property type="evidence" value="ECO:0007669"/>
    <property type="project" value="UniProtKB-SubCell"/>
</dbReference>
<dbReference type="GO" id="GO:0030139">
    <property type="term" value="C:endocytic vesicle"/>
    <property type="evidence" value="ECO:0000250"/>
    <property type="project" value="UniProtKB"/>
</dbReference>
<dbReference type="GO" id="GO:0005576">
    <property type="term" value="C:extracellular region"/>
    <property type="evidence" value="ECO:0000304"/>
    <property type="project" value="Reactome"/>
</dbReference>
<dbReference type="GO" id="GO:0005615">
    <property type="term" value="C:extracellular space"/>
    <property type="evidence" value="ECO:0000314"/>
    <property type="project" value="UniProtKB"/>
</dbReference>
<dbReference type="GO" id="GO:0030426">
    <property type="term" value="C:growth cone"/>
    <property type="evidence" value="ECO:0000314"/>
    <property type="project" value="UniProtKB"/>
</dbReference>
<dbReference type="GO" id="GO:0043025">
    <property type="term" value="C:neuronal cell body"/>
    <property type="evidence" value="ECO:0000314"/>
    <property type="project" value="UniProtKB"/>
</dbReference>
<dbReference type="GO" id="GO:0005730">
    <property type="term" value="C:nucleolus"/>
    <property type="evidence" value="ECO:0000250"/>
    <property type="project" value="UniProtKB"/>
</dbReference>
<dbReference type="GO" id="GO:0005634">
    <property type="term" value="C:nucleus"/>
    <property type="evidence" value="ECO:0000314"/>
    <property type="project" value="UniProtKB"/>
</dbReference>
<dbReference type="GO" id="GO:0003779">
    <property type="term" value="F:actin binding"/>
    <property type="evidence" value="ECO:0000250"/>
    <property type="project" value="UniProtKB"/>
</dbReference>
<dbReference type="GO" id="GO:0005507">
    <property type="term" value="F:copper ion binding"/>
    <property type="evidence" value="ECO:0000250"/>
    <property type="project" value="UniProtKB"/>
</dbReference>
<dbReference type="GO" id="GO:0003677">
    <property type="term" value="F:DNA binding"/>
    <property type="evidence" value="ECO:0007669"/>
    <property type="project" value="UniProtKB-KW"/>
</dbReference>
<dbReference type="GO" id="GO:0004519">
    <property type="term" value="F:endonuclease activity"/>
    <property type="evidence" value="ECO:0007669"/>
    <property type="project" value="UniProtKB-KW"/>
</dbReference>
<dbReference type="GO" id="GO:0008201">
    <property type="term" value="F:heparin binding"/>
    <property type="evidence" value="ECO:0000250"/>
    <property type="project" value="UniProtKB"/>
</dbReference>
<dbReference type="GO" id="GO:0042803">
    <property type="term" value="F:protein homodimerization activity"/>
    <property type="evidence" value="ECO:0000250"/>
    <property type="project" value="UniProtKB"/>
</dbReference>
<dbReference type="GO" id="GO:0003723">
    <property type="term" value="F:RNA binding"/>
    <property type="evidence" value="ECO:0000305"/>
    <property type="project" value="MGI"/>
</dbReference>
<dbReference type="GO" id="GO:0004540">
    <property type="term" value="F:RNA nuclease activity"/>
    <property type="evidence" value="ECO:0000314"/>
    <property type="project" value="MGI"/>
</dbReference>
<dbReference type="GO" id="GO:0005102">
    <property type="term" value="F:signaling receptor binding"/>
    <property type="evidence" value="ECO:0000250"/>
    <property type="project" value="UniProtKB"/>
</dbReference>
<dbReference type="GO" id="GO:0004549">
    <property type="term" value="F:tRNA-specific ribonuclease activity"/>
    <property type="evidence" value="ECO:0000314"/>
    <property type="project" value="UniProtKB"/>
</dbReference>
<dbReference type="GO" id="GO:0030041">
    <property type="term" value="P:actin filament polymerization"/>
    <property type="evidence" value="ECO:0000250"/>
    <property type="project" value="UniProtKB"/>
</dbReference>
<dbReference type="GO" id="GO:0001525">
    <property type="term" value="P:angiogenesis"/>
    <property type="evidence" value="ECO:0000250"/>
    <property type="project" value="UniProtKB"/>
</dbReference>
<dbReference type="GO" id="GO:0071470">
    <property type="term" value="P:cellular response to osmotic stress"/>
    <property type="evidence" value="ECO:0000314"/>
    <property type="project" value="UniProtKB"/>
</dbReference>
<dbReference type="GO" id="GO:0007417">
    <property type="term" value="P:central nervous system development"/>
    <property type="evidence" value="ECO:0000303"/>
    <property type="project" value="UniProtKB"/>
</dbReference>
<dbReference type="GO" id="GO:0071425">
    <property type="term" value="P:hematopoietic stem cell proliferation"/>
    <property type="evidence" value="ECO:0000315"/>
    <property type="project" value="UniProtKB"/>
</dbReference>
<dbReference type="GO" id="GO:0043066">
    <property type="term" value="P:negative regulation of apoptotic process"/>
    <property type="evidence" value="ECO:0000314"/>
    <property type="project" value="UniProtKB"/>
</dbReference>
<dbReference type="GO" id="GO:2000773">
    <property type="term" value="P:negative regulation of cellular senescence"/>
    <property type="evidence" value="ECO:0000314"/>
    <property type="project" value="UniProtKB"/>
</dbReference>
<dbReference type="GO" id="GO:0048662">
    <property type="term" value="P:negative regulation of smooth muscle cell proliferation"/>
    <property type="evidence" value="ECO:0000250"/>
    <property type="project" value="UniProtKB"/>
</dbReference>
<dbReference type="GO" id="GO:0032055">
    <property type="term" value="P:negative regulation of translation in response to stress"/>
    <property type="evidence" value="ECO:0000315"/>
    <property type="project" value="UniProtKB"/>
</dbReference>
<dbReference type="GO" id="GO:0001938">
    <property type="term" value="P:positive regulation of endothelial cell proliferation"/>
    <property type="evidence" value="ECO:0000250"/>
    <property type="project" value="UniProtKB"/>
</dbReference>
<dbReference type="GO" id="GO:0050714">
    <property type="term" value="P:positive regulation of protein secretion"/>
    <property type="evidence" value="ECO:0000250"/>
    <property type="project" value="UniProtKB"/>
</dbReference>
<dbReference type="GO" id="GO:0001666">
    <property type="term" value="P:response to hypoxia"/>
    <property type="evidence" value="ECO:0000250"/>
    <property type="project" value="UniProtKB"/>
</dbReference>
<dbReference type="GO" id="GO:0009303">
    <property type="term" value="P:rRNA transcription"/>
    <property type="evidence" value="ECO:0000314"/>
    <property type="project" value="UniProtKB"/>
</dbReference>
<dbReference type="GO" id="GO:0023052">
    <property type="term" value="P:signaling"/>
    <property type="evidence" value="ECO:0000250"/>
    <property type="project" value="UniProtKB"/>
</dbReference>
<dbReference type="GO" id="GO:0034063">
    <property type="term" value="P:stress granule assembly"/>
    <property type="evidence" value="ECO:0000250"/>
    <property type="project" value="UniProtKB"/>
</dbReference>
<dbReference type="GO" id="GO:0036417">
    <property type="term" value="P:tRNA destabilization"/>
    <property type="evidence" value="ECO:0000314"/>
    <property type="project" value="UniProtKB"/>
</dbReference>
<dbReference type="CDD" id="cd06265">
    <property type="entry name" value="RNase_A_canonical"/>
    <property type="match status" value="1"/>
</dbReference>
<dbReference type="FunFam" id="3.10.130.10:FF:000001">
    <property type="entry name" value="Ribonuclease pancreatic"/>
    <property type="match status" value="1"/>
</dbReference>
<dbReference type="Gene3D" id="3.10.130.10">
    <property type="entry name" value="Ribonuclease A-like domain"/>
    <property type="match status" value="1"/>
</dbReference>
<dbReference type="InterPro" id="IPR001427">
    <property type="entry name" value="RNaseA"/>
</dbReference>
<dbReference type="InterPro" id="IPR036816">
    <property type="entry name" value="RNaseA-like_dom_sf"/>
</dbReference>
<dbReference type="InterPro" id="IPR023411">
    <property type="entry name" value="RNaseA_AS"/>
</dbReference>
<dbReference type="InterPro" id="IPR023412">
    <property type="entry name" value="RNaseA_domain"/>
</dbReference>
<dbReference type="PANTHER" id="PTHR11437:SF60">
    <property type="entry name" value="ANGIOGENIN"/>
    <property type="match status" value="1"/>
</dbReference>
<dbReference type="PANTHER" id="PTHR11437">
    <property type="entry name" value="RIBONUCLEASE"/>
    <property type="match status" value="1"/>
</dbReference>
<dbReference type="Pfam" id="PF00074">
    <property type="entry name" value="RnaseA"/>
    <property type="match status" value="1"/>
</dbReference>
<dbReference type="PRINTS" id="PR00794">
    <property type="entry name" value="RIBONUCLEASE"/>
</dbReference>
<dbReference type="SMART" id="SM00092">
    <property type="entry name" value="RNAse_Pc"/>
    <property type="match status" value="1"/>
</dbReference>
<dbReference type="SUPFAM" id="SSF54076">
    <property type="entry name" value="RNase A-like"/>
    <property type="match status" value="1"/>
</dbReference>
<dbReference type="PROSITE" id="PS00127">
    <property type="entry name" value="RNASE_PANCREATIC"/>
    <property type="match status" value="1"/>
</dbReference>
<keyword id="KW-0002">3D-structure</keyword>
<keyword id="KW-0037">Angiogenesis</keyword>
<keyword id="KW-0963">Cytoplasm</keyword>
<keyword id="KW-0217">Developmental protein</keyword>
<keyword id="KW-0221">Differentiation</keyword>
<keyword id="KW-0903">Direct protein sequencing</keyword>
<keyword id="KW-1015">Disulfide bond</keyword>
<keyword id="KW-0238">DNA-binding</keyword>
<keyword id="KW-0255">Endonuclease</keyword>
<keyword id="KW-0378">Hydrolase</keyword>
<keyword id="KW-0540">Nuclease</keyword>
<keyword id="KW-0539">Nucleus</keyword>
<keyword id="KW-0652">Protein synthesis inhibitor</keyword>
<keyword id="KW-0873">Pyrrolidone carboxylic acid</keyword>
<keyword id="KW-1185">Reference proteome</keyword>
<keyword id="KW-0964">Secreted</keyword>
<keyword id="KW-0732">Signal</keyword>
<keyword id="KW-0346">Stress response</keyword>
<feature type="signal peptide" evidence="10">
    <location>
        <begin position="1"/>
        <end position="24"/>
    </location>
</feature>
<feature type="chain" id="PRO_0000030857" description="Angiogenin">
    <location>
        <begin position="25"/>
        <end position="145"/>
    </location>
</feature>
<feature type="short sequence motif" description="Nucleolar localization signal" evidence="1">
    <location>
        <begin position="55"/>
        <end position="59"/>
    </location>
</feature>
<feature type="active site" description="Proton acceptor" evidence="1">
    <location>
        <position position="37"/>
    </location>
</feature>
<feature type="active site" description="Proton donor" evidence="1">
    <location>
        <position position="137"/>
    </location>
</feature>
<feature type="binding site" evidence="1">
    <location>
        <position position="45"/>
    </location>
    <ligand>
        <name>tRNA</name>
        <dbReference type="ChEBI" id="CHEBI:17843"/>
    </ligand>
</feature>
<feature type="binding site" evidence="1">
    <location>
        <position position="46"/>
    </location>
    <ligand>
        <name>tRNA</name>
        <dbReference type="ChEBI" id="CHEBI:17843"/>
    </ligand>
</feature>
<feature type="binding site" evidence="1">
    <location>
        <position position="104"/>
    </location>
    <ligand>
        <name>tRNA</name>
        <dbReference type="ChEBI" id="CHEBI:17843"/>
    </ligand>
</feature>
<feature type="binding site" evidence="1">
    <location>
        <position position="126"/>
    </location>
    <ligand>
        <name>tRNA</name>
        <dbReference type="ChEBI" id="CHEBI:17843"/>
    </ligand>
</feature>
<feature type="modified residue" description="Pyrrolidone carboxylic acid" evidence="1">
    <location>
        <position position="25"/>
    </location>
</feature>
<feature type="disulfide bond" evidence="2">
    <location>
        <begin position="50"/>
        <end position="104"/>
    </location>
</feature>
<feature type="disulfide bond" evidence="2">
    <location>
        <begin position="63"/>
        <end position="115"/>
    </location>
</feature>
<feature type="disulfide bond" evidence="2">
    <location>
        <begin position="81"/>
        <end position="130"/>
    </location>
</feature>
<feature type="helix" evidence="14">
    <location>
        <begin position="29"/>
        <end position="37"/>
    </location>
</feature>
<feature type="helix" evidence="14">
    <location>
        <begin position="47"/>
        <end position="56"/>
    </location>
</feature>
<feature type="turn" evidence="14">
    <location>
        <begin position="60"/>
        <end position="63"/>
    </location>
</feature>
<feature type="strand" evidence="14">
    <location>
        <begin position="65"/>
        <end position="70"/>
    </location>
</feature>
<feature type="helix" evidence="14">
    <location>
        <begin position="74"/>
        <end position="78"/>
    </location>
</feature>
<feature type="helix" evidence="14">
    <location>
        <begin position="79"/>
        <end position="81"/>
    </location>
</feature>
<feature type="turn" evidence="14">
    <location>
        <begin position="82"/>
        <end position="84"/>
    </location>
</feature>
<feature type="strand" evidence="14">
    <location>
        <begin position="85"/>
        <end position="88"/>
    </location>
</feature>
<feature type="turn" evidence="14">
    <location>
        <begin position="89"/>
        <end position="91"/>
    </location>
</feature>
<feature type="strand" evidence="14">
    <location>
        <begin position="92"/>
        <end position="97"/>
    </location>
</feature>
<feature type="strand" evidence="14">
    <location>
        <begin position="99"/>
        <end position="108"/>
    </location>
</feature>
<feature type="strand" evidence="14">
    <location>
        <begin position="111"/>
        <end position="114"/>
    </location>
</feature>
<feature type="strand" evidence="14">
    <location>
        <begin position="116"/>
        <end position="124"/>
    </location>
</feature>
<feature type="strand" evidence="14">
    <location>
        <begin position="127"/>
        <end position="131"/>
    </location>
</feature>
<feature type="strand" evidence="14">
    <location>
        <begin position="134"/>
        <end position="138"/>
    </location>
</feature>
<feature type="helix" evidence="14">
    <location>
        <begin position="140"/>
        <end position="142"/>
    </location>
</feature>
<name>ANGI_MOUSE</name>
<comment type="function">
    <text evidence="1 3 4 5 6 7 8 9">Secreted ribonuclease that can either promote or restrict cell proliferation of target cells, depending on the context (PubMed:19114040, PubMed:27518564, PubMed:32510170, PubMed:33758201, PubMed:33986151). Endocytosed in target cells via its receptor PLXNB2 and translocates to the cytoplasm or nucleus (PubMed:29100074, PubMed:33758201). Under stress conditions, localizes to the cytoplasm and promotes the assembly of stress granules (SGs): specifically cleaves a subset of tRNAs within anticodon loops to produce tRNA-derived stress-induced fragments (tiRNAs), resulting in translation repression and inhibition of cell proliferation (PubMed:19114040, PubMed:24752898, PubMed:33986151). tiRNas also prevent formation of apoptosome, thereby promoting cell survival (PubMed:24752898). Preferentially cleaves RNAs between a pyrimidine and an adenosine residue, suggesting that it cleaves the anticodon loop of tRNA(Ala) (32-UUAGCAU-38) after positions 33 and 36 (By similarity). Cleaves a subset of tRNAs, including tRNA(Ala), tRNA(Glu), tRNA(Gly), tRNA(Lys), tRNA(Val), tRNA(His), tRNA(Asp) and tRNA(Sec) (By similarity). Under growth conditions and in differentiated cells, translocates to the nucleus and stimulates ribosomal RNA (rRNA) transcription, including that containing the initiation site sequences of 45S rRNA, thereby promoting cell growth and proliferation (By similarity). Angiogenin induces vascularization of normal and malignant tissues via its ability to promote rRNA transcription (By similarity). Involved in hematopoietic stem and progenitor cell (HSPC) growth and survival by promoting rRNA transcription in growth conditions and inhibiting translation in response to stress, respectively (PubMed:27518564). Mediates the crosstalk between myeloid and intestinal epithelial cells to protect the intestinal epithelial barrier integrity: secreted by myeloid cells and promotes intestinal epithelial cells proliferation and survival (PubMed:32510170). Also mediates osteoclast-endothelial cell crosstalk in growing bone: produced by osteoclasts and protects the neighboring vascular cells against senescence by promoting rRNA transcription (PubMed:33758201).</text>
</comment>
<comment type="activity regulation">
    <text evidence="1">Has weak tRNA ribonuclease activity by itself due to partial autoinhibition by its C-terminus (residues 139-145), which folds into a short alpha-helix that partially occludes the substrate-binding site (By similarity). In absence of stress, the ribonuclease activity is inhibited by RNH1 in the cytoplasm (By similarity). In response to stress, dissociates from RNH1 in the cytoplasm and associates with cytoplasmic ribosomes with vacant A-sites: ribosomes directly activate the tRNA ribonuclease activity of ANG by refolding the C-terminal alpha-helix (By similarity). In response to stress, the angiogenic activity of ANG is inhibited by RNH1 in the nucleus (By similarity).</text>
</comment>
<comment type="subunit">
    <text evidence="1">Homodimer. Interacts with RNH1; inhibiting ANG ribonuclease activity (By similarity). Interacts with PCNA (By similarity).</text>
</comment>
<comment type="subcellular location">
    <subcellularLocation>
        <location evidence="8">Secreted</location>
    </subcellularLocation>
    <subcellularLocation>
        <location evidence="8">Nucleus</location>
    </subcellularLocation>
    <subcellularLocation>
        <location evidence="1">Nucleus</location>
        <location evidence="1">Nucleolus</location>
    </subcellularLocation>
    <subcellularLocation>
        <location evidence="1">Cytoplasm</location>
        <location evidence="1">Stress granule</location>
    </subcellularLocation>
    <text evidence="1 8">The secreted protein is rapidly endocytosed by target cells following interaction with PLXNB2 receptor and translocated to the cytoplasm and nucleus (PubMed:33758201). In the nucleus, accumulates in the nucleolus and binds to DNA (By similarity).</text>
</comment>
<comment type="similarity">
    <text evidence="12">Belongs to the pancreatic ribonuclease family.</text>
</comment>
<evidence type="ECO:0000250" key="1">
    <source>
        <dbReference type="UniProtKB" id="P03950"/>
    </source>
</evidence>
<evidence type="ECO:0000269" key="2">
    <source>
    </source>
</evidence>
<evidence type="ECO:0000269" key="3">
    <source>
    </source>
</evidence>
<evidence type="ECO:0000269" key="4">
    <source>
    </source>
</evidence>
<evidence type="ECO:0000269" key="5">
    <source>
    </source>
</evidence>
<evidence type="ECO:0000269" key="6">
    <source>
    </source>
</evidence>
<evidence type="ECO:0000269" key="7">
    <source>
    </source>
</evidence>
<evidence type="ECO:0000269" key="8">
    <source>
    </source>
</evidence>
<evidence type="ECO:0000269" key="9">
    <source>
    </source>
</evidence>
<evidence type="ECO:0000269" key="10">
    <source>
    </source>
</evidence>
<evidence type="ECO:0000303" key="11">
    <source>
    </source>
</evidence>
<evidence type="ECO:0000305" key="12"/>
<evidence type="ECO:0000312" key="13">
    <source>
        <dbReference type="MGI" id="MGI:88022"/>
    </source>
</evidence>
<evidence type="ECO:0007829" key="14">
    <source>
        <dbReference type="PDB" id="2BWK"/>
    </source>
</evidence>
<protein>
    <recommendedName>
        <fullName evidence="11">Angiogenin</fullName>
        <ecNumber evidence="4 9">3.1.27.-</ecNumber>
    </recommendedName>
    <alternativeName>
        <fullName>Angiogenin-1</fullName>
    </alternativeName>
    <alternativeName>
        <fullName>Ribonuclease 5</fullName>
        <shortName>RNase 5</shortName>
    </alternativeName>
</protein>
<organism>
    <name type="scientific">Mus musculus</name>
    <name type="common">Mouse</name>
    <dbReference type="NCBI Taxonomy" id="10090"/>
    <lineage>
        <taxon>Eukaryota</taxon>
        <taxon>Metazoa</taxon>
        <taxon>Chordata</taxon>
        <taxon>Craniata</taxon>
        <taxon>Vertebrata</taxon>
        <taxon>Euteleostomi</taxon>
        <taxon>Mammalia</taxon>
        <taxon>Eutheria</taxon>
        <taxon>Euarchontoglires</taxon>
        <taxon>Glires</taxon>
        <taxon>Rodentia</taxon>
        <taxon>Myomorpha</taxon>
        <taxon>Muroidea</taxon>
        <taxon>Muridae</taxon>
        <taxon>Murinae</taxon>
        <taxon>Mus</taxon>
        <taxon>Mus</taxon>
    </lineage>
</organism>
<gene>
    <name evidence="11 13" type="primary">Ang</name>
    <name type="synonym">Ang1</name>
    <name type="synonym">Rnase5</name>
    <name type="synonym">Rnase5a</name>
</gene>
<proteinExistence type="evidence at protein level"/>
<sequence>MAISPGPLFLIFVLGLVVIPPTLAQDDSRYTKFLTQHHDAKPKGRDDRYCERMMKRRSLTSPCKDVNTFIHGNKSNIKAICGANGSPYRENLRMSKSPFQVTTCKHTGGSPRPPCQYRASAGFRHVVIACENGLPVHFDESFFSL</sequence>